<comment type="function">
    <text evidence="1">This protein binds to 23S rRNA in the presence of protein L20.</text>
</comment>
<comment type="subunit">
    <text evidence="1">Part of the 50S ribosomal subunit. Contacts protein L20.</text>
</comment>
<comment type="similarity">
    <text evidence="1">Belongs to the bacterial ribosomal protein bL21 family.</text>
</comment>
<accession>Q8K9G3</accession>
<evidence type="ECO:0000255" key="1">
    <source>
        <dbReference type="HAMAP-Rule" id="MF_01363"/>
    </source>
</evidence>
<evidence type="ECO:0000305" key="2"/>
<protein>
    <recommendedName>
        <fullName evidence="1">Large ribosomal subunit protein bL21</fullName>
    </recommendedName>
    <alternativeName>
        <fullName evidence="2">50S ribosomal protein L21</fullName>
    </alternativeName>
</protein>
<proteinExistence type="inferred from homology"/>
<sequence length="107" mass="12572">MYAVFMSGGKQYRVKKNQIIQLEKLNNSPGSIIEFDKILMISAKKEVKIGEPFLKGTKIKAHVENHGRLKKIKIIKFNRRKHYKKKQGHRQYFTNVKILDINNFNGK</sequence>
<name>RL21_BUCAP</name>
<gene>
    <name evidence="1" type="primary">rplU</name>
    <name type="ordered locus">BUsg_374</name>
</gene>
<reference key="1">
    <citation type="journal article" date="2002" name="Science">
        <title>50 million years of genomic stasis in endosymbiotic bacteria.</title>
        <authorList>
            <person name="Tamas I."/>
            <person name="Klasson L."/>
            <person name="Canbaeck B."/>
            <person name="Naeslund A.K."/>
            <person name="Eriksson A.-S."/>
            <person name="Wernegreen J.J."/>
            <person name="Sandstroem J.P."/>
            <person name="Moran N.A."/>
            <person name="Andersson S.G.E."/>
        </authorList>
    </citation>
    <scope>NUCLEOTIDE SEQUENCE [LARGE SCALE GENOMIC DNA]</scope>
    <source>
        <strain>Sg</strain>
    </source>
</reference>
<feature type="chain" id="PRO_0000180993" description="Large ribosomal subunit protein bL21">
    <location>
        <begin position="1"/>
        <end position="107"/>
    </location>
</feature>
<organism>
    <name type="scientific">Buchnera aphidicola subsp. Schizaphis graminum (strain Sg)</name>
    <dbReference type="NCBI Taxonomy" id="198804"/>
    <lineage>
        <taxon>Bacteria</taxon>
        <taxon>Pseudomonadati</taxon>
        <taxon>Pseudomonadota</taxon>
        <taxon>Gammaproteobacteria</taxon>
        <taxon>Enterobacterales</taxon>
        <taxon>Erwiniaceae</taxon>
        <taxon>Buchnera</taxon>
    </lineage>
</organism>
<keyword id="KW-0687">Ribonucleoprotein</keyword>
<keyword id="KW-0689">Ribosomal protein</keyword>
<keyword id="KW-0694">RNA-binding</keyword>
<keyword id="KW-0699">rRNA-binding</keyword>
<dbReference type="EMBL" id="AE013218">
    <property type="protein sequence ID" value="AAM67926.1"/>
    <property type="molecule type" value="Genomic_DNA"/>
</dbReference>
<dbReference type="RefSeq" id="WP_011053893.1">
    <property type="nucleotide sequence ID" value="NC_004061.1"/>
</dbReference>
<dbReference type="SMR" id="Q8K9G3"/>
<dbReference type="STRING" id="198804.BUsg_374"/>
<dbReference type="GeneID" id="93003844"/>
<dbReference type="KEGG" id="bas:BUsg_374"/>
<dbReference type="eggNOG" id="COG0261">
    <property type="taxonomic scope" value="Bacteria"/>
</dbReference>
<dbReference type="HOGENOM" id="CLU_061463_3_3_6"/>
<dbReference type="Proteomes" id="UP000000416">
    <property type="component" value="Chromosome"/>
</dbReference>
<dbReference type="GO" id="GO:0005737">
    <property type="term" value="C:cytoplasm"/>
    <property type="evidence" value="ECO:0007669"/>
    <property type="project" value="UniProtKB-ARBA"/>
</dbReference>
<dbReference type="GO" id="GO:1990904">
    <property type="term" value="C:ribonucleoprotein complex"/>
    <property type="evidence" value="ECO:0007669"/>
    <property type="project" value="UniProtKB-KW"/>
</dbReference>
<dbReference type="GO" id="GO:0005840">
    <property type="term" value="C:ribosome"/>
    <property type="evidence" value="ECO:0007669"/>
    <property type="project" value="UniProtKB-KW"/>
</dbReference>
<dbReference type="GO" id="GO:0019843">
    <property type="term" value="F:rRNA binding"/>
    <property type="evidence" value="ECO:0007669"/>
    <property type="project" value="UniProtKB-UniRule"/>
</dbReference>
<dbReference type="GO" id="GO:0003735">
    <property type="term" value="F:structural constituent of ribosome"/>
    <property type="evidence" value="ECO:0007669"/>
    <property type="project" value="InterPro"/>
</dbReference>
<dbReference type="GO" id="GO:0006412">
    <property type="term" value="P:translation"/>
    <property type="evidence" value="ECO:0007669"/>
    <property type="project" value="UniProtKB-UniRule"/>
</dbReference>
<dbReference type="HAMAP" id="MF_01363">
    <property type="entry name" value="Ribosomal_bL21"/>
    <property type="match status" value="1"/>
</dbReference>
<dbReference type="InterPro" id="IPR028909">
    <property type="entry name" value="bL21-like"/>
</dbReference>
<dbReference type="InterPro" id="IPR036164">
    <property type="entry name" value="bL21-like_sf"/>
</dbReference>
<dbReference type="InterPro" id="IPR001787">
    <property type="entry name" value="Ribosomal_bL21"/>
</dbReference>
<dbReference type="InterPro" id="IPR018258">
    <property type="entry name" value="Ribosomal_bL21_CS"/>
</dbReference>
<dbReference type="NCBIfam" id="TIGR00061">
    <property type="entry name" value="L21"/>
    <property type="match status" value="1"/>
</dbReference>
<dbReference type="PANTHER" id="PTHR21349">
    <property type="entry name" value="50S RIBOSOMAL PROTEIN L21"/>
    <property type="match status" value="1"/>
</dbReference>
<dbReference type="PANTHER" id="PTHR21349:SF0">
    <property type="entry name" value="LARGE RIBOSOMAL SUBUNIT PROTEIN BL21M"/>
    <property type="match status" value="1"/>
</dbReference>
<dbReference type="Pfam" id="PF00829">
    <property type="entry name" value="Ribosomal_L21p"/>
    <property type="match status" value="1"/>
</dbReference>
<dbReference type="SUPFAM" id="SSF141091">
    <property type="entry name" value="L21p-like"/>
    <property type="match status" value="1"/>
</dbReference>
<dbReference type="PROSITE" id="PS01169">
    <property type="entry name" value="RIBOSOMAL_L21"/>
    <property type="match status" value="1"/>
</dbReference>